<accession>A4VHN6</accession>
<sequence length="228" mass="25746">MGQKVHPTGIRLGIVKEHTSVWYADGRTYADYLLADLNVREYLQDKLKSASVSRIDIHRPAQTARITIHTARPGIVIGKKGEDVEKLRQDLTKQMGVPVHINIEEIRKPELDAMLVAQSVAQQLERRVMFRRAMKRAVQNAMRIGAKGIKIQVSGRLGGAEIARTEWYREGRVPLHTLRADIDYNTYEAHTTYGVIGVKVWIFKGEVIGGRHEELKPQAPAPRKKAAK</sequence>
<comment type="function">
    <text evidence="1">Binds the lower part of the 30S subunit head. Binds mRNA in the 70S ribosome, positioning it for translation.</text>
</comment>
<comment type="subunit">
    <text evidence="1">Part of the 30S ribosomal subunit. Forms a tight complex with proteins S10 and S14.</text>
</comment>
<comment type="similarity">
    <text evidence="1">Belongs to the universal ribosomal protein uS3 family.</text>
</comment>
<evidence type="ECO:0000255" key="1">
    <source>
        <dbReference type="HAMAP-Rule" id="MF_01309"/>
    </source>
</evidence>
<evidence type="ECO:0000305" key="2"/>
<organism>
    <name type="scientific">Stutzerimonas stutzeri (strain A1501)</name>
    <name type="common">Pseudomonas stutzeri</name>
    <dbReference type="NCBI Taxonomy" id="379731"/>
    <lineage>
        <taxon>Bacteria</taxon>
        <taxon>Pseudomonadati</taxon>
        <taxon>Pseudomonadota</taxon>
        <taxon>Gammaproteobacteria</taxon>
        <taxon>Pseudomonadales</taxon>
        <taxon>Pseudomonadaceae</taxon>
        <taxon>Stutzerimonas</taxon>
    </lineage>
</organism>
<name>RS3_STUS1</name>
<proteinExistence type="inferred from homology"/>
<reference key="1">
    <citation type="journal article" date="2008" name="Proc. Natl. Acad. Sci. U.S.A.">
        <title>Nitrogen fixation island and rhizosphere competence traits in the genome of root-associated Pseudomonas stutzeri A1501.</title>
        <authorList>
            <person name="Yan Y."/>
            <person name="Yang J."/>
            <person name="Dou Y."/>
            <person name="Chen M."/>
            <person name="Ping S."/>
            <person name="Peng J."/>
            <person name="Lu W."/>
            <person name="Zhang W."/>
            <person name="Yao Z."/>
            <person name="Li H."/>
            <person name="Liu W."/>
            <person name="He S."/>
            <person name="Geng L."/>
            <person name="Zhang X."/>
            <person name="Yang F."/>
            <person name="Yu H."/>
            <person name="Zhan Y."/>
            <person name="Li D."/>
            <person name="Lin Z."/>
            <person name="Wang Y."/>
            <person name="Elmerich C."/>
            <person name="Lin M."/>
            <person name="Jin Q."/>
        </authorList>
    </citation>
    <scope>NUCLEOTIDE SEQUENCE [LARGE SCALE GENOMIC DNA]</scope>
    <source>
        <strain>A1501</strain>
    </source>
</reference>
<gene>
    <name evidence="1" type="primary">rpsC</name>
    <name type="ordered locus">PST_0790</name>
</gene>
<keyword id="KW-1185">Reference proteome</keyword>
<keyword id="KW-0687">Ribonucleoprotein</keyword>
<keyword id="KW-0689">Ribosomal protein</keyword>
<keyword id="KW-0694">RNA-binding</keyword>
<keyword id="KW-0699">rRNA-binding</keyword>
<feature type="chain" id="PRO_0000293858" description="Small ribosomal subunit protein uS3">
    <location>
        <begin position="1"/>
        <end position="228"/>
    </location>
</feature>
<feature type="domain" description="KH type-2" evidence="1">
    <location>
        <begin position="39"/>
        <end position="107"/>
    </location>
</feature>
<protein>
    <recommendedName>
        <fullName evidence="1">Small ribosomal subunit protein uS3</fullName>
    </recommendedName>
    <alternativeName>
        <fullName evidence="2">30S ribosomal protein S3</fullName>
    </alternativeName>
</protein>
<dbReference type="EMBL" id="CP000304">
    <property type="protein sequence ID" value="ABP78487.1"/>
    <property type="molecule type" value="Genomic_DNA"/>
</dbReference>
<dbReference type="RefSeq" id="WP_003289210.1">
    <property type="nucleotide sequence ID" value="NC_009434.1"/>
</dbReference>
<dbReference type="SMR" id="A4VHN6"/>
<dbReference type="GeneID" id="75213391"/>
<dbReference type="KEGG" id="psa:PST_0790"/>
<dbReference type="eggNOG" id="COG0092">
    <property type="taxonomic scope" value="Bacteria"/>
</dbReference>
<dbReference type="HOGENOM" id="CLU_058591_0_2_6"/>
<dbReference type="Proteomes" id="UP000000233">
    <property type="component" value="Chromosome"/>
</dbReference>
<dbReference type="GO" id="GO:0022627">
    <property type="term" value="C:cytosolic small ribosomal subunit"/>
    <property type="evidence" value="ECO:0007669"/>
    <property type="project" value="TreeGrafter"/>
</dbReference>
<dbReference type="GO" id="GO:0003729">
    <property type="term" value="F:mRNA binding"/>
    <property type="evidence" value="ECO:0007669"/>
    <property type="project" value="UniProtKB-UniRule"/>
</dbReference>
<dbReference type="GO" id="GO:0019843">
    <property type="term" value="F:rRNA binding"/>
    <property type="evidence" value="ECO:0007669"/>
    <property type="project" value="UniProtKB-UniRule"/>
</dbReference>
<dbReference type="GO" id="GO:0003735">
    <property type="term" value="F:structural constituent of ribosome"/>
    <property type="evidence" value="ECO:0007669"/>
    <property type="project" value="InterPro"/>
</dbReference>
<dbReference type="GO" id="GO:0006412">
    <property type="term" value="P:translation"/>
    <property type="evidence" value="ECO:0007669"/>
    <property type="project" value="UniProtKB-UniRule"/>
</dbReference>
<dbReference type="CDD" id="cd02412">
    <property type="entry name" value="KH-II_30S_S3"/>
    <property type="match status" value="1"/>
</dbReference>
<dbReference type="FunFam" id="3.30.1140.32:FF:000001">
    <property type="entry name" value="30S ribosomal protein S3"/>
    <property type="match status" value="1"/>
</dbReference>
<dbReference type="FunFam" id="3.30.300.20:FF:000001">
    <property type="entry name" value="30S ribosomal protein S3"/>
    <property type="match status" value="1"/>
</dbReference>
<dbReference type="Gene3D" id="3.30.300.20">
    <property type="match status" value="1"/>
</dbReference>
<dbReference type="Gene3D" id="3.30.1140.32">
    <property type="entry name" value="Ribosomal protein S3, C-terminal domain"/>
    <property type="match status" value="1"/>
</dbReference>
<dbReference type="HAMAP" id="MF_01309_B">
    <property type="entry name" value="Ribosomal_uS3_B"/>
    <property type="match status" value="1"/>
</dbReference>
<dbReference type="InterPro" id="IPR004087">
    <property type="entry name" value="KH_dom"/>
</dbReference>
<dbReference type="InterPro" id="IPR015946">
    <property type="entry name" value="KH_dom-like_a/b"/>
</dbReference>
<dbReference type="InterPro" id="IPR004044">
    <property type="entry name" value="KH_dom_type_2"/>
</dbReference>
<dbReference type="InterPro" id="IPR009019">
    <property type="entry name" value="KH_sf_prok-type"/>
</dbReference>
<dbReference type="InterPro" id="IPR036419">
    <property type="entry name" value="Ribosomal_S3_C_sf"/>
</dbReference>
<dbReference type="InterPro" id="IPR005704">
    <property type="entry name" value="Ribosomal_uS3_bac-typ"/>
</dbReference>
<dbReference type="InterPro" id="IPR001351">
    <property type="entry name" value="Ribosomal_uS3_C"/>
</dbReference>
<dbReference type="InterPro" id="IPR018280">
    <property type="entry name" value="Ribosomal_uS3_CS"/>
</dbReference>
<dbReference type="NCBIfam" id="TIGR01009">
    <property type="entry name" value="rpsC_bact"/>
    <property type="match status" value="1"/>
</dbReference>
<dbReference type="PANTHER" id="PTHR11760">
    <property type="entry name" value="30S/40S RIBOSOMAL PROTEIN S3"/>
    <property type="match status" value="1"/>
</dbReference>
<dbReference type="PANTHER" id="PTHR11760:SF19">
    <property type="entry name" value="SMALL RIBOSOMAL SUBUNIT PROTEIN US3C"/>
    <property type="match status" value="1"/>
</dbReference>
<dbReference type="Pfam" id="PF07650">
    <property type="entry name" value="KH_2"/>
    <property type="match status" value="1"/>
</dbReference>
<dbReference type="Pfam" id="PF00189">
    <property type="entry name" value="Ribosomal_S3_C"/>
    <property type="match status" value="1"/>
</dbReference>
<dbReference type="SMART" id="SM00322">
    <property type="entry name" value="KH"/>
    <property type="match status" value="1"/>
</dbReference>
<dbReference type="SUPFAM" id="SSF54814">
    <property type="entry name" value="Prokaryotic type KH domain (KH-domain type II)"/>
    <property type="match status" value="1"/>
</dbReference>
<dbReference type="SUPFAM" id="SSF54821">
    <property type="entry name" value="Ribosomal protein S3 C-terminal domain"/>
    <property type="match status" value="1"/>
</dbReference>
<dbReference type="PROSITE" id="PS50823">
    <property type="entry name" value="KH_TYPE_2"/>
    <property type="match status" value="1"/>
</dbReference>
<dbReference type="PROSITE" id="PS00548">
    <property type="entry name" value="RIBOSOMAL_S3"/>
    <property type="match status" value="1"/>
</dbReference>